<proteinExistence type="inferred from homology"/>
<keyword id="KW-0201">Cytochrome c-type biogenesis</keyword>
<keyword id="KW-0349">Heme</keyword>
<keyword id="KW-0408">Iron</keyword>
<keyword id="KW-0472">Membrane</keyword>
<keyword id="KW-0479">Metal-binding</keyword>
<keyword id="KW-0496">Mitochondrion</keyword>
<keyword id="KW-0999">Mitochondrion inner membrane</keyword>
<keyword id="KW-1185">Reference proteome</keyword>
<keyword id="KW-0812">Transmembrane</keyword>
<keyword id="KW-1133">Transmembrane helix</keyword>
<accession>B8AFK5</accession>
<gene>
    <name evidence="3" type="primary">CCMH</name>
    <name evidence="4" type="ORF">OsI_06730</name>
</gene>
<reference key="1">
    <citation type="journal article" date="2005" name="PLoS Biol.">
        <title>The genomes of Oryza sativa: a history of duplications.</title>
        <authorList>
            <person name="Yu J."/>
            <person name="Wang J."/>
            <person name="Lin W."/>
            <person name="Li S."/>
            <person name="Li H."/>
            <person name="Zhou J."/>
            <person name="Ni P."/>
            <person name="Dong W."/>
            <person name="Hu S."/>
            <person name="Zeng C."/>
            <person name="Zhang J."/>
            <person name="Zhang Y."/>
            <person name="Li R."/>
            <person name="Xu Z."/>
            <person name="Li S."/>
            <person name="Li X."/>
            <person name="Zheng H."/>
            <person name="Cong L."/>
            <person name="Lin L."/>
            <person name="Yin J."/>
            <person name="Geng J."/>
            <person name="Li G."/>
            <person name="Shi J."/>
            <person name="Liu J."/>
            <person name="Lv H."/>
            <person name="Li J."/>
            <person name="Wang J."/>
            <person name="Deng Y."/>
            <person name="Ran L."/>
            <person name="Shi X."/>
            <person name="Wang X."/>
            <person name="Wu Q."/>
            <person name="Li C."/>
            <person name="Ren X."/>
            <person name="Wang J."/>
            <person name="Wang X."/>
            <person name="Li D."/>
            <person name="Liu D."/>
            <person name="Zhang X."/>
            <person name="Ji Z."/>
            <person name="Zhao W."/>
            <person name="Sun Y."/>
            <person name="Zhang Z."/>
            <person name="Bao J."/>
            <person name="Han Y."/>
            <person name="Dong L."/>
            <person name="Ji J."/>
            <person name="Chen P."/>
            <person name="Wu S."/>
            <person name="Liu J."/>
            <person name="Xiao Y."/>
            <person name="Bu D."/>
            <person name="Tan J."/>
            <person name="Yang L."/>
            <person name="Ye C."/>
            <person name="Zhang J."/>
            <person name="Xu J."/>
            <person name="Zhou Y."/>
            <person name="Yu Y."/>
            <person name="Zhang B."/>
            <person name="Zhuang S."/>
            <person name="Wei H."/>
            <person name="Liu B."/>
            <person name="Lei M."/>
            <person name="Yu H."/>
            <person name="Li Y."/>
            <person name="Xu H."/>
            <person name="Wei S."/>
            <person name="He X."/>
            <person name="Fang L."/>
            <person name="Zhang Z."/>
            <person name="Zhang Y."/>
            <person name="Huang X."/>
            <person name="Su Z."/>
            <person name="Tong W."/>
            <person name="Li J."/>
            <person name="Tong Z."/>
            <person name="Li S."/>
            <person name="Ye J."/>
            <person name="Wang L."/>
            <person name="Fang L."/>
            <person name="Lei T."/>
            <person name="Chen C.-S."/>
            <person name="Chen H.-C."/>
            <person name="Xu Z."/>
            <person name="Li H."/>
            <person name="Huang H."/>
            <person name="Zhang F."/>
            <person name="Xu H."/>
            <person name="Li N."/>
            <person name="Zhao C."/>
            <person name="Li S."/>
            <person name="Dong L."/>
            <person name="Huang Y."/>
            <person name="Li L."/>
            <person name="Xi Y."/>
            <person name="Qi Q."/>
            <person name="Li W."/>
            <person name="Zhang B."/>
            <person name="Hu W."/>
            <person name="Zhang Y."/>
            <person name="Tian X."/>
            <person name="Jiao Y."/>
            <person name="Liang X."/>
            <person name="Jin J."/>
            <person name="Gao L."/>
            <person name="Zheng W."/>
            <person name="Hao B."/>
            <person name="Liu S.-M."/>
            <person name="Wang W."/>
            <person name="Yuan L."/>
            <person name="Cao M."/>
            <person name="McDermott J."/>
            <person name="Samudrala R."/>
            <person name="Wang J."/>
            <person name="Wong G.K.-S."/>
            <person name="Yang H."/>
        </authorList>
    </citation>
    <scope>NUCLEOTIDE SEQUENCE [LARGE SCALE GENOMIC DNA]</scope>
    <source>
        <strain>cv. 93-11</strain>
    </source>
</reference>
<sequence>MATEEDVKQRQIIESRARNISHNVRCTECGSQSIEDSQADIAILLRKLIRDEIKSGKSDKEIYKKLQADYGETILYTPKFDLQTAAIWLSPVIVGGVAAGVWAYKKHRQRTNVHIMALNLVRGVPLTPREKETMLDVLTPPPPANKWWWPGK</sequence>
<organism>
    <name type="scientific">Oryza sativa subsp. indica</name>
    <name type="common">Rice</name>
    <dbReference type="NCBI Taxonomy" id="39946"/>
    <lineage>
        <taxon>Eukaryota</taxon>
        <taxon>Viridiplantae</taxon>
        <taxon>Streptophyta</taxon>
        <taxon>Embryophyta</taxon>
        <taxon>Tracheophyta</taxon>
        <taxon>Spermatophyta</taxon>
        <taxon>Magnoliopsida</taxon>
        <taxon>Liliopsida</taxon>
        <taxon>Poales</taxon>
        <taxon>Poaceae</taxon>
        <taxon>BOP clade</taxon>
        <taxon>Oryzoideae</taxon>
        <taxon>Oryzeae</taxon>
        <taxon>Oryzinae</taxon>
        <taxon>Oryza</taxon>
        <taxon>Oryza sativa</taxon>
    </lineage>
</organism>
<comment type="function">
    <text evidence="1">Plays a role in mitochondrial cytochrome c maturation. Probable component of a heme lyase complex involved in the reduction of apocytochrome c.</text>
</comment>
<comment type="subcellular location">
    <subcellularLocation>
        <location evidence="1">Mitochondrion inner membrane</location>
        <topology evidence="2">Single-pass membrane protein</topology>
    </subcellularLocation>
</comment>
<comment type="similarity">
    <text evidence="3">Belongs to the CcmH/CycL/Ccl2/NrfF family.</text>
</comment>
<feature type="chain" id="PRO_0000432848" description="Cytochrome c-type biogenesis CcmH-like mitochondrial protein">
    <location>
        <begin position="1"/>
        <end position="152"/>
    </location>
</feature>
<feature type="topological domain" description="Mitochondrial intermembrane" evidence="1">
    <location>
        <begin position="1"/>
        <end position="83"/>
    </location>
</feature>
<feature type="transmembrane region" description="Helical" evidence="2">
    <location>
        <begin position="84"/>
        <end position="104"/>
    </location>
</feature>
<feature type="topological domain" description="Mitochondrial matrix" evidence="1">
    <location>
        <begin position="105"/>
        <end position="152"/>
    </location>
</feature>
<feature type="binding site" description="covalent" evidence="1">
    <location>
        <position position="26"/>
    </location>
    <ligand>
        <name>heme</name>
        <dbReference type="ChEBI" id="CHEBI:30413"/>
    </ligand>
</feature>
<feature type="binding site" description="covalent" evidence="1">
    <location>
        <position position="29"/>
    </location>
    <ligand>
        <name>heme</name>
        <dbReference type="ChEBI" id="CHEBI:30413"/>
    </ligand>
</feature>
<dbReference type="EMBL" id="CM000127">
    <property type="protein sequence ID" value="EEC72904.1"/>
    <property type="molecule type" value="Genomic_DNA"/>
</dbReference>
<dbReference type="SMR" id="B8AFK5"/>
<dbReference type="STRING" id="39946.B8AFK5"/>
<dbReference type="EnsemblPlants" id="BGIOSGA007957-TA">
    <property type="protein sequence ID" value="BGIOSGA007957-PA"/>
    <property type="gene ID" value="BGIOSGA007957"/>
</dbReference>
<dbReference type="EnsemblPlants" id="OsKYG_02g0011870.01">
    <property type="protein sequence ID" value="OsKYG_02g0011870.01"/>
    <property type="gene ID" value="OsKYG_02g0011870"/>
</dbReference>
<dbReference type="Gramene" id="BGIOSGA007957-TA">
    <property type="protein sequence ID" value="BGIOSGA007957-PA"/>
    <property type="gene ID" value="BGIOSGA007957"/>
</dbReference>
<dbReference type="Gramene" id="OsKYG_02g0011870.01">
    <property type="protein sequence ID" value="OsKYG_02g0011870.01"/>
    <property type="gene ID" value="OsKYG_02g0011870"/>
</dbReference>
<dbReference type="HOGENOM" id="CLU_107187_1_0_1"/>
<dbReference type="OMA" id="AGIWAYN"/>
<dbReference type="Proteomes" id="UP000007015">
    <property type="component" value="Chromosome 2"/>
</dbReference>
<dbReference type="GO" id="GO:0005743">
    <property type="term" value="C:mitochondrial inner membrane"/>
    <property type="evidence" value="ECO:0007669"/>
    <property type="project" value="UniProtKB-SubCell"/>
</dbReference>
<dbReference type="GO" id="GO:0032991">
    <property type="term" value="C:protein-containing complex"/>
    <property type="evidence" value="ECO:0007669"/>
    <property type="project" value="EnsemblPlants"/>
</dbReference>
<dbReference type="GO" id="GO:0046872">
    <property type="term" value="F:metal ion binding"/>
    <property type="evidence" value="ECO:0007669"/>
    <property type="project" value="UniProtKB-KW"/>
</dbReference>
<dbReference type="GO" id="GO:0016491">
    <property type="term" value="F:oxidoreductase activity"/>
    <property type="evidence" value="ECO:0007669"/>
    <property type="project" value="EnsemblPlants"/>
</dbReference>
<dbReference type="GO" id="GO:0017004">
    <property type="term" value="P:cytochrome complex assembly"/>
    <property type="evidence" value="ECO:0007669"/>
    <property type="project" value="UniProtKB-KW"/>
</dbReference>
<dbReference type="GO" id="GO:0009793">
    <property type="term" value="P:embryo development ending in seed dormancy"/>
    <property type="evidence" value="ECO:0007669"/>
    <property type="project" value="EnsemblPlants"/>
</dbReference>
<dbReference type="CDD" id="cd16378">
    <property type="entry name" value="CcmH_N"/>
    <property type="match status" value="1"/>
</dbReference>
<dbReference type="FunFam" id="1.10.8.640:FF:000001">
    <property type="entry name" value="Cytochrome c-type biogenesis protein"/>
    <property type="match status" value="1"/>
</dbReference>
<dbReference type="Gene3D" id="1.10.8.640">
    <property type="entry name" value="Cytochrome C biogenesis protein"/>
    <property type="match status" value="1"/>
</dbReference>
<dbReference type="InterPro" id="IPR005616">
    <property type="entry name" value="CcmH/CycL/Ccl2/NrfF_N"/>
</dbReference>
<dbReference type="InterPro" id="IPR038297">
    <property type="entry name" value="CcmH/CycL/NrfF/Ccl2_sf"/>
</dbReference>
<dbReference type="PANTHER" id="PTHR47601">
    <property type="match status" value="1"/>
</dbReference>
<dbReference type="PANTHER" id="PTHR47601:SF1">
    <property type="entry name" value="CYTOCHROME C-TYPE BIOGENESIS CCMH-LIKE MITOCHONDRIAL PROTEIN"/>
    <property type="match status" value="1"/>
</dbReference>
<dbReference type="Pfam" id="PF03918">
    <property type="entry name" value="CcmH"/>
    <property type="match status" value="1"/>
</dbReference>
<protein>
    <recommendedName>
        <fullName evidence="3">Cytochrome c-type biogenesis CcmH-like mitochondrial protein</fullName>
        <shortName evidence="3">OsCCMH</shortName>
    </recommendedName>
</protein>
<evidence type="ECO:0000250" key="1">
    <source>
        <dbReference type="UniProtKB" id="Q9XI46"/>
    </source>
</evidence>
<evidence type="ECO:0000255" key="2"/>
<evidence type="ECO:0000305" key="3"/>
<evidence type="ECO:0000312" key="4">
    <source>
        <dbReference type="EMBL" id="EEC72904.1"/>
    </source>
</evidence>
<name>CCMH_ORYSI</name>